<comment type="function">
    <text evidence="5">Can complement an H.volcanii mutant strain that is thymidine auxotroph because it lacks the two dihydrofolate reductase genes encoded by hdrA and hdrB.</text>
</comment>
<comment type="catalytic activity">
    <reaction>
        <text>(6S)-5,6,7,8-tetrahydrofolyl-(gamma-L-Glu)(n) + L-glutamate + ATP = (6S)-5,6,7,8-tetrahydrofolyl-(gamma-L-Glu)(n+1) + ADP + phosphate + H(+)</text>
        <dbReference type="Rhea" id="RHEA:10580"/>
        <dbReference type="Rhea" id="RHEA-COMP:14738"/>
        <dbReference type="Rhea" id="RHEA-COMP:14740"/>
        <dbReference type="ChEBI" id="CHEBI:15378"/>
        <dbReference type="ChEBI" id="CHEBI:29985"/>
        <dbReference type="ChEBI" id="CHEBI:30616"/>
        <dbReference type="ChEBI" id="CHEBI:43474"/>
        <dbReference type="ChEBI" id="CHEBI:141005"/>
        <dbReference type="ChEBI" id="CHEBI:456216"/>
        <dbReference type="EC" id="6.3.2.17"/>
    </reaction>
</comment>
<comment type="catalytic activity">
    <reaction>
        <text>(7,8-dihydropterin-6-yl)methyl diphosphate + 4-aminobenzoate = 7,8-dihydropteroate + diphosphate</text>
        <dbReference type="Rhea" id="RHEA:19949"/>
        <dbReference type="ChEBI" id="CHEBI:17836"/>
        <dbReference type="ChEBI" id="CHEBI:17839"/>
        <dbReference type="ChEBI" id="CHEBI:33019"/>
        <dbReference type="ChEBI" id="CHEBI:72950"/>
        <dbReference type="EC" id="2.5.1.15"/>
    </reaction>
</comment>
<comment type="cofactor">
    <cofactor evidence="2">
        <name>Mg(2+)</name>
        <dbReference type="ChEBI" id="CHEBI:18420"/>
    </cofactor>
</comment>
<comment type="pathway">
    <text>Cofactor biosynthesis; tetrahydrofolylpolyglutamate biosynthesis.</text>
</comment>
<comment type="pathway">
    <text>Cofactor biosynthesis; tetrahydrofolate biosynthesis; 7,8-dihydrofolate from 2-amino-4-hydroxy-6-hydroxymethyl-7,8-dihydropteridine diphosphate and 4-aminobenzoate: step 1/2.</text>
</comment>
<comment type="similarity">
    <text evidence="6">In the N-terminal section; belongs to the folylpolyglutamate synthase family.</text>
</comment>
<comment type="similarity">
    <text evidence="6">In the C-terminal section; belongs to the DHPS family.</text>
</comment>
<evidence type="ECO:0000250" key="1"/>
<evidence type="ECO:0000250" key="2">
    <source>
        <dbReference type="UniProtKB" id="P0AC13"/>
    </source>
</evidence>
<evidence type="ECO:0000250" key="3">
    <source>
        <dbReference type="UniProtKB" id="P9WND1"/>
    </source>
</evidence>
<evidence type="ECO:0000255" key="4">
    <source>
        <dbReference type="PROSITE-ProRule" id="PRU00334"/>
    </source>
</evidence>
<evidence type="ECO:0000269" key="5">
    <source>
    </source>
</evidence>
<evidence type="ECO:0000305" key="6"/>
<keyword id="KW-0067">ATP-binding</keyword>
<keyword id="KW-0289">Folate biosynthesis</keyword>
<keyword id="KW-0436">Ligase</keyword>
<keyword id="KW-0460">Magnesium</keyword>
<keyword id="KW-0479">Metal-binding</keyword>
<keyword id="KW-0511">Multifunctional enzyme</keyword>
<keyword id="KW-0547">Nucleotide-binding</keyword>
<keyword id="KW-1185">Reference proteome</keyword>
<keyword id="KW-0808">Transferase</keyword>
<name>FOLCP_HALSA</name>
<protein>
    <recommendedName>
        <fullName>Probable bifunctional folylpolyglutamate synthase/dihydropteroate synthase</fullName>
    </recommendedName>
    <domain>
        <recommendedName>
            <fullName>Probable folylpolyglutamate synthase</fullName>
            <ecNumber>6.3.2.17</ecNumber>
        </recommendedName>
        <alternativeName>
            <fullName>Tetrahydrofolylpolyglutamate synthase</fullName>
            <shortName>Tetrahydrofolate synthase</shortName>
        </alternativeName>
    </domain>
    <domain>
        <recommendedName>
            <fullName>Probable dihydropteroate synthase</fullName>
            <shortName>DHPS</shortName>
            <ecNumber>2.5.1.15</ecNumber>
        </recommendedName>
        <alternativeName>
            <fullName>Dihydropteroate pyrophosphorylase</fullName>
        </alternativeName>
    </domain>
</protein>
<reference key="1">
    <citation type="journal article" date="2000" name="Proc. Natl. Acad. Sci. U.S.A.">
        <title>Genome sequence of Halobacterium species NRC-1.</title>
        <authorList>
            <person name="Ng W.V."/>
            <person name="Kennedy S.P."/>
            <person name="Mahairas G.G."/>
            <person name="Berquist B."/>
            <person name="Pan M."/>
            <person name="Shukla H.D."/>
            <person name="Lasky S.R."/>
            <person name="Baliga N.S."/>
            <person name="Thorsson V."/>
            <person name="Sbrogna J."/>
            <person name="Swartzell S."/>
            <person name="Weir D."/>
            <person name="Hall J."/>
            <person name="Dahl T.A."/>
            <person name="Welti R."/>
            <person name="Goo Y.A."/>
            <person name="Leithauser B."/>
            <person name="Keller K."/>
            <person name="Cruz R."/>
            <person name="Danson M.J."/>
            <person name="Hough D.W."/>
            <person name="Maddocks D.G."/>
            <person name="Jablonski P.E."/>
            <person name="Krebs M.P."/>
            <person name="Angevine C.M."/>
            <person name="Dale H."/>
            <person name="Isenbarger T.A."/>
            <person name="Peck R.F."/>
            <person name="Pohlschroder M."/>
            <person name="Spudich J.L."/>
            <person name="Jung K.-H."/>
            <person name="Alam M."/>
            <person name="Freitas T."/>
            <person name="Hou S."/>
            <person name="Daniels C.J."/>
            <person name="Dennis P.P."/>
            <person name="Omer A.D."/>
            <person name="Ebhardt H."/>
            <person name="Lowe T.M."/>
            <person name="Liang P."/>
            <person name="Riley M."/>
            <person name="Hood L."/>
            <person name="DasSarma S."/>
        </authorList>
    </citation>
    <scope>NUCLEOTIDE SEQUENCE [LARGE SCALE GENOMIC DNA]</scope>
    <source>
        <strain>ATCC 700922 / JCM 11081 / NRC-1</strain>
    </source>
</reference>
<reference key="2">
    <citation type="journal article" date="2004" name="Mol. Microbiol.">
        <title>An alternative pathway for reduced folate biosynthesis in bacteria and halophilic archaea.</title>
        <authorList>
            <person name="Levin I."/>
            <person name="Giladi M."/>
            <person name="Altman-Price N."/>
            <person name="Ortenberg R."/>
            <person name="Mevarech M."/>
        </authorList>
    </citation>
    <scope>FUNCTION</scope>
</reference>
<gene>
    <name type="primary">folP</name>
    <name type="ordered locus">VNG_0412G</name>
</gene>
<feature type="chain" id="PRO_0000428788" description="Probable bifunctional folylpolyglutamate synthase/dihydropteroate synthase">
    <location>
        <begin position="1"/>
        <end position="815"/>
    </location>
</feature>
<feature type="domain" description="Pterin-binding" evidence="4">
    <location>
        <begin position="553"/>
        <end position="803"/>
    </location>
</feature>
<feature type="region of interest" description="Folylpolyglutamate synthase">
    <location>
        <begin position="1"/>
        <end position="416"/>
    </location>
</feature>
<feature type="region of interest" description="DHPS">
    <location>
        <begin position="555"/>
        <end position="815"/>
    </location>
</feature>
<feature type="binding site" evidence="1">
    <location>
        <begin position="47"/>
        <end position="53"/>
    </location>
    <ligand>
        <name>ATP</name>
        <dbReference type="ChEBI" id="CHEBI:30616"/>
    </ligand>
</feature>
<feature type="binding site" evidence="3">
    <location>
        <position position="560"/>
    </location>
    <ligand>
        <name>Mg(2+)</name>
        <dbReference type="ChEBI" id="CHEBI:18420"/>
    </ligand>
</feature>
<feature type="binding site" evidence="2">
    <location>
        <position position="600"/>
    </location>
    <ligand>
        <name>(7,8-dihydropterin-6-yl)methyl diphosphate</name>
        <dbReference type="ChEBI" id="CHEBI:72950"/>
    </ligand>
</feature>
<feature type="binding site" evidence="2">
    <location>
        <position position="633"/>
    </location>
    <ligand>
        <name>(7,8-dihydropterin-6-yl)methyl diphosphate</name>
        <dbReference type="ChEBI" id="CHEBI:72950"/>
    </ligand>
</feature>
<feature type="binding site" evidence="2">
    <location>
        <position position="652"/>
    </location>
    <ligand>
        <name>(7,8-dihydropterin-6-yl)methyl diphosphate</name>
        <dbReference type="ChEBI" id="CHEBI:72950"/>
    </ligand>
</feature>
<feature type="binding site" evidence="2">
    <location>
        <position position="722"/>
    </location>
    <ligand>
        <name>(7,8-dihydropterin-6-yl)methyl diphosphate</name>
        <dbReference type="ChEBI" id="CHEBI:72950"/>
    </ligand>
</feature>
<feature type="binding site" evidence="2">
    <location>
        <position position="758"/>
    </location>
    <ligand>
        <name>(7,8-dihydropterin-6-yl)methyl diphosphate</name>
        <dbReference type="ChEBI" id="CHEBI:72950"/>
    </ligand>
</feature>
<feature type="binding site" evidence="2">
    <location>
        <begin position="791"/>
        <end position="793"/>
    </location>
    <ligand>
        <name>(7,8-dihydropterin-6-yl)methyl diphosphate</name>
        <dbReference type="ChEBI" id="CHEBI:72950"/>
    </ligand>
</feature>
<dbReference type="EC" id="6.3.2.17"/>
<dbReference type="EC" id="2.5.1.15"/>
<dbReference type="EMBL" id="AE004437">
    <property type="protein sequence ID" value="AAG18964.1"/>
    <property type="molecule type" value="Genomic_DNA"/>
</dbReference>
<dbReference type="PIR" id="H84199">
    <property type="entry name" value="H84199"/>
</dbReference>
<dbReference type="RefSeq" id="WP_010902259.1">
    <property type="nucleotide sequence ID" value="NC_002607.1"/>
</dbReference>
<dbReference type="SMR" id="Q9HS44"/>
<dbReference type="STRING" id="64091.VNG_0412G"/>
<dbReference type="PaxDb" id="64091-VNG_0412G"/>
<dbReference type="GeneID" id="68693334"/>
<dbReference type="KEGG" id="hal:VNG_0412G"/>
<dbReference type="PATRIC" id="fig|64091.14.peg.308"/>
<dbReference type="HOGENOM" id="CLU_017222_0_0_2"/>
<dbReference type="InParanoid" id="Q9HS44"/>
<dbReference type="OrthoDB" id="75177at2157"/>
<dbReference type="PhylomeDB" id="Q9HS44"/>
<dbReference type="UniPathway" id="UPA00077">
    <property type="reaction ID" value="UER00156"/>
</dbReference>
<dbReference type="UniPathway" id="UPA00850"/>
<dbReference type="Proteomes" id="UP000000554">
    <property type="component" value="Chromosome"/>
</dbReference>
<dbReference type="GO" id="GO:0005524">
    <property type="term" value="F:ATP binding"/>
    <property type="evidence" value="ECO:0007669"/>
    <property type="project" value="UniProtKB-KW"/>
</dbReference>
<dbReference type="GO" id="GO:0004156">
    <property type="term" value="F:dihydropteroate synthase activity"/>
    <property type="evidence" value="ECO:0000318"/>
    <property type="project" value="GO_Central"/>
</dbReference>
<dbReference type="GO" id="GO:0046872">
    <property type="term" value="F:metal ion binding"/>
    <property type="evidence" value="ECO:0007669"/>
    <property type="project" value="UniProtKB-KW"/>
</dbReference>
<dbReference type="GO" id="GO:0004326">
    <property type="term" value="F:tetrahydrofolylpolyglutamate synthase activity"/>
    <property type="evidence" value="ECO:0007669"/>
    <property type="project" value="UniProtKB-EC"/>
</dbReference>
<dbReference type="GO" id="GO:0046656">
    <property type="term" value="P:folic acid biosynthetic process"/>
    <property type="evidence" value="ECO:0007669"/>
    <property type="project" value="UniProtKB-KW"/>
</dbReference>
<dbReference type="GO" id="GO:0046654">
    <property type="term" value="P:tetrahydrofolate biosynthetic process"/>
    <property type="evidence" value="ECO:0000318"/>
    <property type="project" value="GO_Central"/>
</dbReference>
<dbReference type="CDD" id="cd00739">
    <property type="entry name" value="DHPS"/>
    <property type="match status" value="1"/>
</dbReference>
<dbReference type="FunFam" id="3.40.1190.10:FF:000011">
    <property type="entry name" value="Folylpolyglutamate synthase/dihydrofolate synthase"/>
    <property type="match status" value="1"/>
</dbReference>
<dbReference type="FunFam" id="3.20.20.20:FF:000015">
    <property type="entry name" value="Probable bifunctional folylpolyglutamate synthase/dihydropteroate synthase"/>
    <property type="match status" value="1"/>
</dbReference>
<dbReference type="Gene3D" id="3.20.20.20">
    <property type="entry name" value="Dihydropteroate synthase-like"/>
    <property type="match status" value="1"/>
</dbReference>
<dbReference type="Gene3D" id="3.90.190.20">
    <property type="entry name" value="Mur ligase, C-terminal domain"/>
    <property type="match status" value="1"/>
</dbReference>
<dbReference type="Gene3D" id="3.40.1190.10">
    <property type="entry name" value="Mur-like, catalytic domain"/>
    <property type="match status" value="1"/>
</dbReference>
<dbReference type="InterPro" id="IPR045031">
    <property type="entry name" value="DHP_synth-like"/>
</dbReference>
<dbReference type="InterPro" id="IPR006390">
    <property type="entry name" value="DHP_synth_dom"/>
</dbReference>
<dbReference type="InterPro" id="IPR011005">
    <property type="entry name" value="Dihydropteroate_synth-like_sf"/>
</dbReference>
<dbReference type="InterPro" id="IPR001645">
    <property type="entry name" value="Folylpolyglutamate_synth"/>
</dbReference>
<dbReference type="InterPro" id="IPR018109">
    <property type="entry name" value="Folylpolyglutamate_synth_CS"/>
</dbReference>
<dbReference type="InterPro" id="IPR036565">
    <property type="entry name" value="Mur-like_cat_sf"/>
</dbReference>
<dbReference type="InterPro" id="IPR004101">
    <property type="entry name" value="Mur_ligase_C"/>
</dbReference>
<dbReference type="InterPro" id="IPR036615">
    <property type="entry name" value="Mur_ligase_C_dom_sf"/>
</dbReference>
<dbReference type="InterPro" id="IPR013221">
    <property type="entry name" value="Mur_ligase_cen"/>
</dbReference>
<dbReference type="InterPro" id="IPR000489">
    <property type="entry name" value="Pterin-binding_dom"/>
</dbReference>
<dbReference type="NCBIfam" id="TIGR01496">
    <property type="entry name" value="DHPS"/>
    <property type="match status" value="1"/>
</dbReference>
<dbReference type="NCBIfam" id="TIGR01499">
    <property type="entry name" value="folC"/>
    <property type="match status" value="1"/>
</dbReference>
<dbReference type="PANTHER" id="PTHR20941">
    <property type="entry name" value="FOLATE SYNTHESIS PROTEINS"/>
    <property type="match status" value="1"/>
</dbReference>
<dbReference type="PANTHER" id="PTHR20941:SF1">
    <property type="entry name" value="FOLIC ACID SYNTHESIS PROTEIN FOL1"/>
    <property type="match status" value="1"/>
</dbReference>
<dbReference type="Pfam" id="PF02875">
    <property type="entry name" value="Mur_ligase_C"/>
    <property type="match status" value="1"/>
</dbReference>
<dbReference type="Pfam" id="PF08245">
    <property type="entry name" value="Mur_ligase_M"/>
    <property type="match status" value="1"/>
</dbReference>
<dbReference type="Pfam" id="PF00809">
    <property type="entry name" value="Pterin_bind"/>
    <property type="match status" value="1"/>
</dbReference>
<dbReference type="SUPFAM" id="SSF51717">
    <property type="entry name" value="Dihydropteroate synthetase-like"/>
    <property type="match status" value="1"/>
</dbReference>
<dbReference type="SUPFAM" id="SSF53623">
    <property type="entry name" value="MurD-like peptide ligases, catalytic domain"/>
    <property type="match status" value="1"/>
</dbReference>
<dbReference type="SUPFAM" id="SSF53244">
    <property type="entry name" value="MurD-like peptide ligases, peptide-binding domain"/>
    <property type="match status" value="1"/>
</dbReference>
<dbReference type="PROSITE" id="PS00792">
    <property type="entry name" value="DHPS_1"/>
    <property type="match status" value="1"/>
</dbReference>
<dbReference type="PROSITE" id="PS00793">
    <property type="entry name" value="DHPS_2"/>
    <property type="match status" value="1"/>
</dbReference>
<dbReference type="PROSITE" id="PS01012">
    <property type="entry name" value="FOLYLPOLYGLU_SYNT_2"/>
    <property type="match status" value="1"/>
</dbReference>
<dbReference type="PROSITE" id="PS50972">
    <property type="entry name" value="PTERIN_BINDING"/>
    <property type="match status" value="1"/>
</dbReference>
<accession>Q9HS44</accession>
<sequence length="815" mass="85894">MRYDEAANFLLDLRRYGPKPGTESTADLLASLGDPHQDGPDYVQIAGSNGKGSTARFTESILRAAGLDVGLYTSPHFDDVRERVTVNGRRMSKAALTTFIETITPYVTERAADGAAPTYFEVVTAMALWQFSRADVDVAVLEVGIGGRLDATSVVDPSASAVTSVTLEHTDVLGETIPEIARDKAHVAPAGDTPLVTATTDDALAAVRDHAGAVRTVGDTAGRDVTATYEGRTNHTEAAVSITGDDWSVATEIPLLGDHQAENAGVAAALARQTAGVDDDAIARGLRSAHWPGRFEVMGADPVVVLDGAHNPGACGAVAETVAEFDYDRLLTVFGAMHDKDHGAMAAALPTPDHVWACEPVPDRAEDADVLAAVFEDAGAGTVSVTRAVESAVADAIAEATADDLVLVAGSLFAVAEARTRWTRTFAETDVDSLDDARDALERAHVTPPGVWRMRGKGVHRVVKTRVQTRQAQYLKEELLSLGGECSVSGLNAQSGAMVDAVMMATMAQFKRLCEKLDGQPYGLSEVGADLRESLGIQAAPATHGYPWEGERTAVMGILNVTPDSFHDGGEYDALEDAVARAESMAENGVDVIDIGGESTRPGADAVSVADELDRVLPVIERISDLDVLLSVDTRKAEVARQALEAGADILNDVTGLDDPEMRFVAAEYDAPIVVMHSIDAPVDPDSDPDYDDVVDDVIAELTERVLLAEKAGVPRERIIVDPGLGFGKSAAEGFELLDRADEFHALGGPVLVGHSHKSMFGAVDRYPDEGGYATAAASALAADRGADIVRVHDVPENVAAVRVAEATRTGADAE</sequence>
<organism>
    <name type="scientific">Halobacterium salinarum (strain ATCC 700922 / JCM 11081 / NRC-1)</name>
    <name type="common">Halobacterium halobium</name>
    <dbReference type="NCBI Taxonomy" id="64091"/>
    <lineage>
        <taxon>Archaea</taxon>
        <taxon>Methanobacteriati</taxon>
        <taxon>Methanobacteriota</taxon>
        <taxon>Stenosarchaea group</taxon>
        <taxon>Halobacteria</taxon>
        <taxon>Halobacteriales</taxon>
        <taxon>Halobacteriaceae</taxon>
        <taxon>Halobacterium</taxon>
        <taxon>Halobacterium salinarum NRC-34001</taxon>
    </lineage>
</organism>
<proteinExistence type="inferred from homology"/>